<proteinExistence type="evidence at transcript level"/>
<accession>Q9PW06</accession>
<comment type="function">
    <text evidence="2">Interconverts simultaneously and stereospecifically pyruvate and lactate with concomitant interconversion of NADH and NAD(+).</text>
</comment>
<comment type="catalytic activity">
    <reaction evidence="2">
        <text>(S)-lactate + NAD(+) = pyruvate + NADH + H(+)</text>
        <dbReference type="Rhea" id="RHEA:23444"/>
        <dbReference type="ChEBI" id="CHEBI:15361"/>
        <dbReference type="ChEBI" id="CHEBI:15378"/>
        <dbReference type="ChEBI" id="CHEBI:16651"/>
        <dbReference type="ChEBI" id="CHEBI:57540"/>
        <dbReference type="ChEBI" id="CHEBI:57945"/>
        <dbReference type="EC" id="1.1.1.27"/>
    </reaction>
    <physiologicalReaction direction="left-to-right" evidence="2">
        <dbReference type="Rhea" id="RHEA:23445"/>
    </physiologicalReaction>
    <physiologicalReaction direction="right-to-left" evidence="2">
        <dbReference type="Rhea" id="RHEA:23446"/>
    </physiologicalReaction>
</comment>
<comment type="pathway">
    <text evidence="2">Fermentation; pyruvate fermentation to lactate; (S)-lactate from pyruvate: step 1/1.</text>
</comment>
<comment type="subunit">
    <text evidence="1">Homotetramer.</text>
</comment>
<comment type="subcellular location">
    <subcellularLocation>
        <location evidence="1">Cytoplasm</location>
    </subcellularLocation>
</comment>
<comment type="similarity">
    <text evidence="3">Belongs to the LDH/MDH superfamily. LDH family.</text>
</comment>
<feature type="initiator methionine" description="Removed" evidence="1">
    <location>
        <position position="1"/>
    </location>
</feature>
<feature type="chain" id="PRO_0000168422" description="L-lactate dehydrogenase A chain">
    <location>
        <begin position="2"/>
        <end position="332"/>
    </location>
</feature>
<feature type="active site" description="Proton acceptor" evidence="1">
    <location>
        <position position="193"/>
    </location>
</feature>
<feature type="binding site" evidence="1">
    <location>
        <begin position="29"/>
        <end position="57"/>
    </location>
    <ligand>
        <name>NAD(+)</name>
        <dbReference type="ChEBI" id="CHEBI:57540"/>
    </ligand>
</feature>
<feature type="binding site" evidence="1">
    <location>
        <position position="99"/>
    </location>
    <ligand>
        <name>NAD(+)</name>
        <dbReference type="ChEBI" id="CHEBI:57540"/>
    </ligand>
</feature>
<feature type="binding site" evidence="1">
    <location>
        <position position="106"/>
    </location>
    <ligand>
        <name>substrate</name>
    </ligand>
</feature>
<feature type="binding site" evidence="1">
    <location>
        <position position="138"/>
    </location>
    <ligand>
        <name>NAD(+)</name>
        <dbReference type="ChEBI" id="CHEBI:57540"/>
    </ligand>
</feature>
<feature type="binding site" evidence="1">
    <location>
        <position position="138"/>
    </location>
    <ligand>
        <name>substrate</name>
    </ligand>
</feature>
<feature type="binding site" evidence="1">
    <location>
        <position position="169"/>
    </location>
    <ligand>
        <name>substrate</name>
    </ligand>
</feature>
<feature type="binding site" evidence="1">
    <location>
        <position position="248"/>
    </location>
    <ligand>
        <name>substrate</name>
    </ligand>
</feature>
<gene>
    <name type="primary">LDHA</name>
</gene>
<sequence>MSVKEHLIHNVHKEEHGHAHNKITVVGVGAVGMACAISILMKDLADELALVDVVEDKLRGEMLDLQHGSLFLRTPKIVSGKDYSVTANSKLVIITAGARQQEGESRLNLVQRNVNIFKFIIPNVVKHSPDCKLLVVSNPVDIWTYVAWKISGFPKHRVIGSGCNLDSARFRYLMGERLGIHSLSCHGWIVGEHGDSSVPVWSGVNVAGVSLKALHPELGTDADKEHWKEVHKQVVDSAYEVIKLKGYTSWAIGLSVADLAETVMKNLRRVHPISTMVKGMYGIKDDVFLSVPCVLGYHGITDVVMMTLKSEEEEKLRKSADTLWGIQKELQF</sequence>
<name>LDHA_ALLMI</name>
<reference key="1">
    <citation type="journal article" date="1997" name="Mol. Biol. Evol.">
        <title>The cDNA cloning and molecular evolution of reptile and pigeon lactate dehydrogenase isozymes.</title>
        <authorList>
            <person name="Mannen H."/>
            <person name="Tsoi S.C.-M."/>
            <person name="Krushkal J.S."/>
            <person name="Li W.-H."/>
            <person name="Li S.S.-L."/>
        </authorList>
    </citation>
    <scope>NUCLEOTIDE SEQUENCE [MRNA]</scope>
    <source>
        <tissue>Muscle</tissue>
    </source>
</reference>
<evidence type="ECO:0000250" key="1"/>
<evidence type="ECO:0000250" key="2">
    <source>
        <dbReference type="UniProtKB" id="P00338"/>
    </source>
</evidence>
<evidence type="ECO:0000305" key="3"/>
<dbReference type="EC" id="1.1.1.27" evidence="2"/>
<dbReference type="EMBL" id="L79951">
    <property type="protein sequence ID" value="AAD46977.1"/>
    <property type="molecule type" value="mRNA"/>
</dbReference>
<dbReference type="RefSeq" id="NP_001274192.1">
    <property type="nucleotide sequence ID" value="NM_001287263.1"/>
</dbReference>
<dbReference type="SMR" id="Q9PW06"/>
<dbReference type="GeneID" id="102559235"/>
<dbReference type="KEGG" id="amj:102559235"/>
<dbReference type="CTD" id="3939"/>
<dbReference type="eggNOG" id="KOG1495">
    <property type="taxonomic scope" value="Eukaryota"/>
</dbReference>
<dbReference type="OrthoDB" id="5405561at2759"/>
<dbReference type="UniPathway" id="UPA00554">
    <property type="reaction ID" value="UER00611"/>
</dbReference>
<dbReference type="GO" id="GO:0005737">
    <property type="term" value="C:cytoplasm"/>
    <property type="evidence" value="ECO:0007669"/>
    <property type="project" value="UniProtKB-SubCell"/>
</dbReference>
<dbReference type="GO" id="GO:0004459">
    <property type="term" value="F:L-lactate dehydrogenase activity"/>
    <property type="evidence" value="ECO:0007669"/>
    <property type="project" value="UniProtKB-EC"/>
</dbReference>
<dbReference type="GO" id="GO:0006089">
    <property type="term" value="P:lactate metabolic process"/>
    <property type="evidence" value="ECO:0007669"/>
    <property type="project" value="TreeGrafter"/>
</dbReference>
<dbReference type="CDD" id="cd05293">
    <property type="entry name" value="LDH_1"/>
    <property type="match status" value="1"/>
</dbReference>
<dbReference type="FunFam" id="3.40.50.720:FF:000029">
    <property type="entry name" value="L-lactate dehydrogenase A chain"/>
    <property type="match status" value="1"/>
</dbReference>
<dbReference type="FunFam" id="3.90.110.10:FF:000003">
    <property type="entry name" value="L-lactate dehydrogenase A chain"/>
    <property type="match status" value="1"/>
</dbReference>
<dbReference type="Gene3D" id="3.90.110.10">
    <property type="entry name" value="Lactate dehydrogenase/glycoside hydrolase, family 4, C-terminal"/>
    <property type="match status" value="1"/>
</dbReference>
<dbReference type="Gene3D" id="3.40.50.720">
    <property type="entry name" value="NAD(P)-binding Rossmann-like Domain"/>
    <property type="match status" value="1"/>
</dbReference>
<dbReference type="HAMAP" id="MF_00488">
    <property type="entry name" value="Lactate_dehydrog"/>
    <property type="match status" value="1"/>
</dbReference>
<dbReference type="InterPro" id="IPR001557">
    <property type="entry name" value="L-lactate/malate_DH"/>
</dbReference>
<dbReference type="InterPro" id="IPR011304">
    <property type="entry name" value="L-lactate_DH"/>
</dbReference>
<dbReference type="InterPro" id="IPR018177">
    <property type="entry name" value="L-lactate_DH_AS"/>
</dbReference>
<dbReference type="InterPro" id="IPR022383">
    <property type="entry name" value="Lactate/malate_DH_C"/>
</dbReference>
<dbReference type="InterPro" id="IPR001236">
    <property type="entry name" value="Lactate/malate_DH_N"/>
</dbReference>
<dbReference type="InterPro" id="IPR015955">
    <property type="entry name" value="Lactate_DH/Glyco_Ohase_4_C"/>
</dbReference>
<dbReference type="InterPro" id="IPR036291">
    <property type="entry name" value="NAD(P)-bd_dom_sf"/>
</dbReference>
<dbReference type="NCBIfam" id="TIGR01771">
    <property type="entry name" value="L-LDH-NAD"/>
    <property type="match status" value="1"/>
</dbReference>
<dbReference type="PANTHER" id="PTHR43128">
    <property type="entry name" value="L-2-HYDROXYCARBOXYLATE DEHYDROGENASE (NAD(P)(+))"/>
    <property type="match status" value="1"/>
</dbReference>
<dbReference type="PANTHER" id="PTHR43128:SF10">
    <property type="entry name" value="L-LACTATE DEHYDROGENASE A CHAIN"/>
    <property type="match status" value="1"/>
</dbReference>
<dbReference type="Pfam" id="PF02866">
    <property type="entry name" value="Ldh_1_C"/>
    <property type="match status" value="1"/>
</dbReference>
<dbReference type="Pfam" id="PF00056">
    <property type="entry name" value="Ldh_1_N"/>
    <property type="match status" value="1"/>
</dbReference>
<dbReference type="PIRSF" id="PIRSF000102">
    <property type="entry name" value="Lac_mal_DH"/>
    <property type="match status" value="1"/>
</dbReference>
<dbReference type="PRINTS" id="PR00086">
    <property type="entry name" value="LLDHDRGNASE"/>
</dbReference>
<dbReference type="SUPFAM" id="SSF56327">
    <property type="entry name" value="LDH C-terminal domain-like"/>
    <property type="match status" value="1"/>
</dbReference>
<dbReference type="SUPFAM" id="SSF51735">
    <property type="entry name" value="NAD(P)-binding Rossmann-fold domains"/>
    <property type="match status" value="1"/>
</dbReference>
<dbReference type="PROSITE" id="PS00064">
    <property type="entry name" value="L_LDH"/>
    <property type="match status" value="1"/>
</dbReference>
<organism>
    <name type="scientific">Alligator mississippiensis</name>
    <name type="common">American alligator</name>
    <dbReference type="NCBI Taxonomy" id="8496"/>
    <lineage>
        <taxon>Eukaryota</taxon>
        <taxon>Metazoa</taxon>
        <taxon>Chordata</taxon>
        <taxon>Craniata</taxon>
        <taxon>Vertebrata</taxon>
        <taxon>Euteleostomi</taxon>
        <taxon>Archelosauria</taxon>
        <taxon>Archosauria</taxon>
        <taxon>Crocodylia</taxon>
        <taxon>Alligatoridae</taxon>
        <taxon>Alligatorinae</taxon>
        <taxon>Alligator</taxon>
    </lineage>
</organism>
<keyword id="KW-0963">Cytoplasm</keyword>
<keyword id="KW-0520">NAD</keyword>
<keyword id="KW-0560">Oxidoreductase</keyword>
<protein>
    <recommendedName>
        <fullName>L-lactate dehydrogenase A chain</fullName>
        <shortName>LDH-A</shortName>
        <ecNumber evidence="2">1.1.1.27</ecNumber>
    </recommendedName>
</protein>